<gene>
    <name evidence="1" type="primary">rpsU2</name>
    <name type="ordered locus">GSU3093</name>
</gene>
<organism>
    <name type="scientific">Geobacter sulfurreducens (strain ATCC 51573 / DSM 12127 / PCA)</name>
    <dbReference type="NCBI Taxonomy" id="243231"/>
    <lineage>
        <taxon>Bacteria</taxon>
        <taxon>Pseudomonadati</taxon>
        <taxon>Thermodesulfobacteriota</taxon>
        <taxon>Desulfuromonadia</taxon>
        <taxon>Geobacterales</taxon>
        <taxon>Geobacteraceae</taxon>
        <taxon>Geobacter</taxon>
    </lineage>
</organism>
<evidence type="ECO:0000255" key="1">
    <source>
        <dbReference type="HAMAP-Rule" id="MF_00358"/>
    </source>
</evidence>
<evidence type="ECO:0000305" key="2"/>
<accession>Q748B4</accession>
<dbReference type="EMBL" id="AE017180">
    <property type="protein sequence ID" value="AAR36484.1"/>
    <property type="molecule type" value="Genomic_DNA"/>
</dbReference>
<dbReference type="RefSeq" id="NP_954134.1">
    <property type="nucleotide sequence ID" value="NC_002939.5"/>
</dbReference>
<dbReference type="SMR" id="Q748B4"/>
<dbReference type="FunCoup" id="Q748B4">
    <property type="interactions" value="526"/>
</dbReference>
<dbReference type="STRING" id="243231.GSU3093"/>
<dbReference type="DNASU" id="2686484"/>
<dbReference type="EnsemblBacteria" id="AAR36484">
    <property type="protein sequence ID" value="AAR36484"/>
    <property type="gene ID" value="GSU3093"/>
</dbReference>
<dbReference type="KEGG" id="gsu:GSU3093"/>
<dbReference type="PATRIC" id="fig|243231.5.peg.3117"/>
<dbReference type="eggNOG" id="COG0828">
    <property type="taxonomic scope" value="Bacteria"/>
</dbReference>
<dbReference type="HOGENOM" id="CLU_159258_1_2_7"/>
<dbReference type="InParanoid" id="Q748B4"/>
<dbReference type="OrthoDB" id="9799244at2"/>
<dbReference type="Proteomes" id="UP000000577">
    <property type="component" value="Chromosome"/>
</dbReference>
<dbReference type="GO" id="GO:1990904">
    <property type="term" value="C:ribonucleoprotein complex"/>
    <property type="evidence" value="ECO:0007669"/>
    <property type="project" value="UniProtKB-KW"/>
</dbReference>
<dbReference type="GO" id="GO:0005840">
    <property type="term" value="C:ribosome"/>
    <property type="evidence" value="ECO:0007669"/>
    <property type="project" value="UniProtKB-KW"/>
</dbReference>
<dbReference type="GO" id="GO:0003735">
    <property type="term" value="F:structural constituent of ribosome"/>
    <property type="evidence" value="ECO:0007669"/>
    <property type="project" value="InterPro"/>
</dbReference>
<dbReference type="GO" id="GO:0006412">
    <property type="term" value="P:translation"/>
    <property type="evidence" value="ECO:0007669"/>
    <property type="project" value="UniProtKB-UniRule"/>
</dbReference>
<dbReference type="Gene3D" id="1.20.5.1150">
    <property type="entry name" value="Ribosomal protein S8"/>
    <property type="match status" value="1"/>
</dbReference>
<dbReference type="HAMAP" id="MF_00358">
    <property type="entry name" value="Ribosomal_bS21"/>
    <property type="match status" value="1"/>
</dbReference>
<dbReference type="InterPro" id="IPR001911">
    <property type="entry name" value="Ribosomal_bS21"/>
</dbReference>
<dbReference type="InterPro" id="IPR038380">
    <property type="entry name" value="Ribosomal_bS21_sf"/>
</dbReference>
<dbReference type="NCBIfam" id="TIGR00030">
    <property type="entry name" value="S21p"/>
    <property type="match status" value="1"/>
</dbReference>
<dbReference type="PANTHER" id="PTHR21109">
    <property type="entry name" value="MITOCHONDRIAL 28S RIBOSOMAL PROTEIN S21"/>
    <property type="match status" value="1"/>
</dbReference>
<dbReference type="PANTHER" id="PTHR21109:SF22">
    <property type="entry name" value="SMALL RIBOSOMAL SUBUNIT PROTEIN BS21"/>
    <property type="match status" value="1"/>
</dbReference>
<dbReference type="Pfam" id="PF01165">
    <property type="entry name" value="Ribosomal_S21"/>
    <property type="match status" value="1"/>
</dbReference>
<dbReference type="PRINTS" id="PR00976">
    <property type="entry name" value="RIBOSOMALS21"/>
</dbReference>
<sequence>MPGVKVKETESFELALKKFKKQCEKAGILSEVRKREHYEKPSIKRKKKAIAARKRAMKKQRKMMD</sequence>
<name>RS212_GEOSL</name>
<protein>
    <recommendedName>
        <fullName evidence="1">Small ribosomal subunit protein bS21B</fullName>
    </recommendedName>
    <alternativeName>
        <fullName evidence="2">30S ribosomal protein S21 2</fullName>
    </alternativeName>
</protein>
<reference key="1">
    <citation type="journal article" date="2003" name="Science">
        <title>Genome of Geobacter sulfurreducens: metal reduction in subsurface environments.</title>
        <authorList>
            <person name="Methe B.A."/>
            <person name="Nelson K.E."/>
            <person name="Eisen J.A."/>
            <person name="Paulsen I.T."/>
            <person name="Nelson W.C."/>
            <person name="Heidelberg J.F."/>
            <person name="Wu D."/>
            <person name="Wu M."/>
            <person name="Ward N.L."/>
            <person name="Beanan M.J."/>
            <person name="Dodson R.J."/>
            <person name="Madupu R."/>
            <person name="Brinkac L.M."/>
            <person name="Daugherty S.C."/>
            <person name="DeBoy R.T."/>
            <person name="Durkin A.S."/>
            <person name="Gwinn M.L."/>
            <person name="Kolonay J.F."/>
            <person name="Sullivan S.A."/>
            <person name="Haft D.H."/>
            <person name="Selengut J."/>
            <person name="Davidsen T.M."/>
            <person name="Zafar N."/>
            <person name="White O."/>
            <person name="Tran B."/>
            <person name="Romero C."/>
            <person name="Forberger H.A."/>
            <person name="Weidman J.F."/>
            <person name="Khouri H.M."/>
            <person name="Feldblyum T.V."/>
            <person name="Utterback T.R."/>
            <person name="Van Aken S.E."/>
            <person name="Lovley D.R."/>
            <person name="Fraser C.M."/>
        </authorList>
    </citation>
    <scope>NUCLEOTIDE SEQUENCE [LARGE SCALE GENOMIC DNA]</scope>
    <source>
        <strain>ATCC 51573 / DSM 12127 / PCA</strain>
    </source>
</reference>
<keyword id="KW-1185">Reference proteome</keyword>
<keyword id="KW-0687">Ribonucleoprotein</keyword>
<keyword id="KW-0689">Ribosomal protein</keyword>
<proteinExistence type="inferred from homology"/>
<feature type="chain" id="PRO_0000266682" description="Small ribosomal subunit protein bS21B">
    <location>
        <begin position="1"/>
        <end position="65"/>
    </location>
</feature>
<comment type="similarity">
    <text evidence="1">Belongs to the bacterial ribosomal protein bS21 family.</text>
</comment>